<dbReference type="EMBL" id="CR761835">
    <property type="protein sequence ID" value="CAJ81997.1"/>
    <property type="molecule type" value="mRNA"/>
</dbReference>
<dbReference type="EMBL" id="BC080931">
    <property type="protein sequence ID" value="AAH80931.1"/>
    <property type="molecule type" value="mRNA"/>
</dbReference>
<dbReference type="RefSeq" id="NP_001008046.1">
    <property type="nucleotide sequence ID" value="NM_001008045.1"/>
</dbReference>
<dbReference type="SMR" id="Q66JF8"/>
<dbReference type="FunCoup" id="Q66JF8">
    <property type="interactions" value="507"/>
</dbReference>
<dbReference type="STRING" id="8364.ENSXETP00000011541"/>
<dbReference type="PaxDb" id="8364-ENSXETP00000017518"/>
<dbReference type="DNASU" id="493408"/>
<dbReference type="GeneID" id="493408"/>
<dbReference type="KEGG" id="xtr:493408"/>
<dbReference type="AGR" id="Xenbase:XB-GENE-481410"/>
<dbReference type="CTD" id="130497"/>
<dbReference type="Xenbase" id="XB-GENE-481410">
    <property type="gene designation" value="osr1"/>
</dbReference>
<dbReference type="eggNOG" id="KOG1721">
    <property type="taxonomic scope" value="Eukaryota"/>
</dbReference>
<dbReference type="HOGENOM" id="CLU_051854_0_0_1"/>
<dbReference type="InParanoid" id="Q66JF8"/>
<dbReference type="OMA" id="CIFCKEE"/>
<dbReference type="OrthoDB" id="9451254at2759"/>
<dbReference type="PhylomeDB" id="Q66JF8"/>
<dbReference type="TreeFam" id="TF350876"/>
<dbReference type="Proteomes" id="UP000008143">
    <property type="component" value="Chromosome 5"/>
</dbReference>
<dbReference type="Bgee" id="ENSXETG00000036783">
    <property type="expression patterns" value="Expressed in neurula embryo and 4 other cell types or tissues"/>
</dbReference>
<dbReference type="GO" id="GO:0005634">
    <property type="term" value="C:nucleus"/>
    <property type="evidence" value="ECO:0007669"/>
    <property type="project" value="UniProtKB-SubCell"/>
</dbReference>
<dbReference type="GO" id="GO:0008270">
    <property type="term" value="F:zinc ion binding"/>
    <property type="evidence" value="ECO:0007669"/>
    <property type="project" value="UniProtKB-KW"/>
</dbReference>
<dbReference type="GO" id="GO:0035779">
    <property type="term" value="P:angioblast cell differentiation"/>
    <property type="evidence" value="ECO:0007669"/>
    <property type="project" value="Ensembl"/>
</dbReference>
<dbReference type="GO" id="GO:0048389">
    <property type="term" value="P:intermediate mesoderm development"/>
    <property type="evidence" value="ECO:0007669"/>
    <property type="project" value="Ensembl"/>
</dbReference>
<dbReference type="GO" id="GO:0048382">
    <property type="term" value="P:mesendoderm development"/>
    <property type="evidence" value="ECO:0007669"/>
    <property type="project" value="Ensembl"/>
</dbReference>
<dbReference type="GO" id="GO:0045892">
    <property type="term" value="P:negative regulation of DNA-templated transcription"/>
    <property type="evidence" value="ECO:0000250"/>
    <property type="project" value="UniProtKB"/>
</dbReference>
<dbReference type="GO" id="GO:0000122">
    <property type="term" value="P:negative regulation of transcription by RNA polymerase II"/>
    <property type="evidence" value="ECO:0000250"/>
    <property type="project" value="UniProtKB"/>
</dbReference>
<dbReference type="GO" id="GO:0033339">
    <property type="term" value="P:pectoral fin development"/>
    <property type="evidence" value="ECO:0007669"/>
    <property type="project" value="Ensembl"/>
</dbReference>
<dbReference type="GO" id="GO:0072015">
    <property type="term" value="P:podocyte development"/>
    <property type="evidence" value="ECO:0007669"/>
    <property type="project" value="Ensembl"/>
</dbReference>
<dbReference type="GO" id="GO:0035777">
    <property type="term" value="P:pronephric distal tubule development"/>
    <property type="evidence" value="ECO:0007669"/>
    <property type="project" value="Ensembl"/>
</dbReference>
<dbReference type="GO" id="GO:0035775">
    <property type="term" value="P:pronephric glomerulus morphogenesis"/>
    <property type="evidence" value="ECO:0007669"/>
    <property type="project" value="Ensembl"/>
</dbReference>
<dbReference type="GO" id="GO:0035778">
    <property type="term" value="P:pronephric nephron tubule epithelial cell differentiation"/>
    <property type="evidence" value="ECO:0007669"/>
    <property type="project" value="Ensembl"/>
</dbReference>
<dbReference type="GO" id="GO:0035776">
    <property type="term" value="P:pronephric proximal tubule development"/>
    <property type="evidence" value="ECO:0007669"/>
    <property type="project" value="Ensembl"/>
</dbReference>
<dbReference type="GO" id="GO:0048793">
    <property type="term" value="P:pronephros development"/>
    <property type="evidence" value="ECO:0000315"/>
    <property type="project" value="UniProtKB"/>
</dbReference>
<dbReference type="GO" id="GO:1903224">
    <property type="term" value="P:regulation of endodermal cell differentiation"/>
    <property type="evidence" value="ECO:0007669"/>
    <property type="project" value="Ensembl"/>
</dbReference>
<dbReference type="GO" id="GO:1900107">
    <property type="term" value="P:regulation of nodal signaling pathway"/>
    <property type="evidence" value="ECO:0007669"/>
    <property type="project" value="Ensembl"/>
</dbReference>
<dbReference type="FunFam" id="3.30.160.60:FF:000254">
    <property type="entry name" value="Odd-skipped related transciption factor 1"/>
    <property type="match status" value="1"/>
</dbReference>
<dbReference type="FunFam" id="3.30.160.60:FF:000090">
    <property type="entry name" value="Odd-skipped-related transciption factor 2"/>
    <property type="match status" value="1"/>
</dbReference>
<dbReference type="FunFam" id="3.30.160.60:FF:000311">
    <property type="entry name" value="protein odd-skipped-related 2 isoform X1"/>
    <property type="match status" value="1"/>
</dbReference>
<dbReference type="Gene3D" id="3.30.160.60">
    <property type="entry name" value="Classic Zinc Finger"/>
    <property type="match status" value="3"/>
</dbReference>
<dbReference type="InterPro" id="IPR050717">
    <property type="entry name" value="C2H2-ZF_Transcription_Reg"/>
</dbReference>
<dbReference type="InterPro" id="IPR036236">
    <property type="entry name" value="Znf_C2H2_sf"/>
</dbReference>
<dbReference type="InterPro" id="IPR013087">
    <property type="entry name" value="Znf_C2H2_type"/>
</dbReference>
<dbReference type="PANTHER" id="PTHR14196">
    <property type="entry name" value="ODD-SKIPPED - RELATED"/>
    <property type="match status" value="1"/>
</dbReference>
<dbReference type="PANTHER" id="PTHR14196:SF5">
    <property type="entry name" value="PROTEIN ODD-SKIPPED-RELATED 1"/>
    <property type="match status" value="1"/>
</dbReference>
<dbReference type="Pfam" id="PF00096">
    <property type="entry name" value="zf-C2H2"/>
    <property type="match status" value="3"/>
</dbReference>
<dbReference type="SMART" id="SM00355">
    <property type="entry name" value="ZnF_C2H2"/>
    <property type="match status" value="3"/>
</dbReference>
<dbReference type="SUPFAM" id="SSF57667">
    <property type="entry name" value="beta-beta-alpha zinc fingers"/>
    <property type="match status" value="2"/>
</dbReference>
<dbReference type="PROSITE" id="PS00028">
    <property type="entry name" value="ZINC_FINGER_C2H2_1"/>
    <property type="match status" value="3"/>
</dbReference>
<dbReference type="PROSITE" id="PS50157">
    <property type="entry name" value="ZINC_FINGER_C2H2_2"/>
    <property type="match status" value="3"/>
</dbReference>
<organism>
    <name type="scientific">Xenopus tropicalis</name>
    <name type="common">Western clawed frog</name>
    <name type="synonym">Silurana tropicalis</name>
    <dbReference type="NCBI Taxonomy" id="8364"/>
    <lineage>
        <taxon>Eukaryota</taxon>
        <taxon>Metazoa</taxon>
        <taxon>Chordata</taxon>
        <taxon>Craniata</taxon>
        <taxon>Vertebrata</taxon>
        <taxon>Euteleostomi</taxon>
        <taxon>Amphibia</taxon>
        <taxon>Batrachia</taxon>
        <taxon>Anura</taxon>
        <taxon>Pipoidea</taxon>
        <taxon>Pipidae</taxon>
        <taxon>Xenopodinae</taxon>
        <taxon>Xenopus</taxon>
        <taxon>Silurana</taxon>
    </lineage>
</organism>
<sequence>MGSKTLPAPVPIHPSLQLTNYSFLQAFNGLPVPAEHMPNLYGFSALHAVHLHQWTLGYPTLHLPRSSFSKVPGVSSLVDSRFQIPTFPLFPHMIHPKQESPNLSNKTKPRFDFANLALAATQEDHCKLGQMDDQGSPPTIGGLLDVTKLTPEKKPTRGRLPSKTKKEFVCKFCGRHFTKSYNLLIHERTHTDERPYTCDICHKAFRRQDHLRDHRYIHSKEKPFKCQECGKGFCQSRTLAVHKTLHTQVKELKPSKIKC</sequence>
<gene>
    <name evidence="7" type="primary">osr1</name>
    <name type="ORF">TGas143j06.1</name>
</gene>
<feature type="chain" id="PRO_0000390731" description="Protein odd-skipped-related 1">
    <location>
        <begin position="1"/>
        <end position="259"/>
    </location>
</feature>
<feature type="zinc finger region" description="C2H2-type 1" evidence="3">
    <location>
        <begin position="168"/>
        <end position="190"/>
    </location>
</feature>
<feature type="zinc finger region" description="C2H2-type 2" evidence="3">
    <location>
        <begin position="196"/>
        <end position="218"/>
    </location>
</feature>
<feature type="zinc finger region" description="C2H2-type 3" evidence="3">
    <location>
        <begin position="224"/>
        <end position="246"/>
    </location>
</feature>
<comment type="function">
    <text evidence="1 4">Transcriptional repressor (By similarity). Required for pronephric kidney development.</text>
</comment>
<comment type="subcellular location">
    <subcellularLocation>
        <location evidence="1">Nucleus</location>
    </subcellularLocation>
</comment>
<comment type="disruption phenotype">
    <text evidence="4">Embryos show a down-regulation of early pronephric markers lhx1/lim1 and pax8, and disruption of pronephric development.</text>
</comment>
<comment type="similarity">
    <text evidence="2">Belongs to the Odd C2H2-type zinc-finger protein family.</text>
</comment>
<keyword id="KW-0217">Developmental protein</keyword>
<keyword id="KW-0479">Metal-binding</keyword>
<keyword id="KW-0539">Nucleus</keyword>
<keyword id="KW-1185">Reference proteome</keyword>
<keyword id="KW-0677">Repeat</keyword>
<keyword id="KW-0678">Repressor</keyword>
<keyword id="KW-0804">Transcription</keyword>
<keyword id="KW-0805">Transcription regulation</keyword>
<keyword id="KW-0862">Zinc</keyword>
<keyword id="KW-0863">Zinc-finger</keyword>
<accession>Q66JF8</accession>
<name>OSR1_XENTR</name>
<reference evidence="8" key="1">
    <citation type="submission" date="2006-10" db="EMBL/GenBank/DDBJ databases">
        <authorList>
            <consortium name="Sanger Xenopus tropicalis EST/cDNA project"/>
        </authorList>
    </citation>
    <scope>NUCLEOTIDE SEQUENCE [LARGE SCALE MRNA]</scope>
    <source>
        <tissue evidence="8">Gastrula</tissue>
    </source>
</reference>
<reference evidence="8" key="2">
    <citation type="submission" date="2004-08" db="EMBL/GenBank/DDBJ databases">
        <authorList>
            <consortium name="NIH - Xenopus Gene Collection (XGC) project"/>
        </authorList>
    </citation>
    <scope>NUCLEOTIDE SEQUENCE [LARGE SCALE MRNA]</scope>
    <source>
        <tissue evidence="7">Tail bud</tissue>
    </source>
</reference>
<reference evidence="6" key="3">
    <citation type="journal article" date="2007" name="Dev. Biol.">
        <title>Odd-skipped genes encode repressors that control kidney development.</title>
        <authorList>
            <person name="Tena J.J."/>
            <person name="Neto A."/>
            <person name="de la Calle-Mustienes E."/>
            <person name="Bras-Pereira C."/>
            <person name="Casares F."/>
            <person name="Gomez-Skarmeta J.L."/>
        </authorList>
    </citation>
    <scope>FUNCTION</scope>
    <scope>DISRUPTION PHENOTYPE</scope>
</reference>
<protein>
    <recommendedName>
        <fullName evidence="7">Protein odd-skipped-related 1</fullName>
        <shortName evidence="5">XOsr1</shortName>
    </recommendedName>
</protein>
<proteinExistence type="evidence at transcript level"/>
<evidence type="ECO:0000250" key="1">
    <source>
        <dbReference type="UniProtKB" id="P86413"/>
    </source>
</evidence>
<evidence type="ECO:0000255" key="2"/>
<evidence type="ECO:0000255" key="3">
    <source>
        <dbReference type="PROSITE-ProRule" id="PRU00042"/>
    </source>
</evidence>
<evidence type="ECO:0000269" key="4">
    <source>
    </source>
</evidence>
<evidence type="ECO:0000303" key="5">
    <source>
    </source>
</evidence>
<evidence type="ECO:0000305" key="6"/>
<evidence type="ECO:0000312" key="7">
    <source>
        <dbReference type="EMBL" id="AAH80931.1"/>
    </source>
</evidence>
<evidence type="ECO:0000312" key="8">
    <source>
        <dbReference type="EMBL" id="CAJ81997.1"/>
    </source>
</evidence>